<dbReference type="SMR" id="P56825"/>
<dbReference type="GO" id="GO:0046872">
    <property type="term" value="F:metal ion binding"/>
    <property type="evidence" value="ECO:0007669"/>
    <property type="project" value="UniProtKB-KW"/>
</dbReference>
<dbReference type="GO" id="GO:0016491">
    <property type="term" value="F:oxidoreductase activity"/>
    <property type="evidence" value="ECO:0007669"/>
    <property type="project" value="InterPro"/>
</dbReference>
<dbReference type="GO" id="GO:0005344">
    <property type="term" value="F:oxygen carrier activity"/>
    <property type="evidence" value="ECO:0007669"/>
    <property type="project" value="UniProtKB-KW"/>
</dbReference>
<dbReference type="Gene3D" id="1.10.1280.10">
    <property type="entry name" value="Di-copper center containing domain from catechol oxidase"/>
    <property type="match status" value="1"/>
</dbReference>
<dbReference type="InterPro" id="IPR008922">
    <property type="entry name" value="Di-copper_centre_dom_sf"/>
</dbReference>
<dbReference type="InterPro" id="IPR050316">
    <property type="entry name" value="Tyrosinase/Hemocyanin"/>
</dbReference>
<dbReference type="InterPro" id="IPR002227">
    <property type="entry name" value="Tyrosinase_Cu-bd"/>
</dbReference>
<dbReference type="PANTHER" id="PTHR11474">
    <property type="entry name" value="TYROSINASE FAMILY MEMBER"/>
    <property type="match status" value="1"/>
</dbReference>
<dbReference type="Pfam" id="PF00264">
    <property type="entry name" value="Tyrosinase"/>
    <property type="match status" value="1"/>
</dbReference>
<dbReference type="SUPFAM" id="SSF48056">
    <property type="entry name" value="Di-copper centre-containing domain"/>
    <property type="match status" value="1"/>
</dbReference>
<dbReference type="PROSITE" id="PS00497">
    <property type="entry name" value="TYROSINASE_1"/>
    <property type="match status" value="1"/>
</dbReference>
<comment type="function">
    <text>Hemocyanins are copper-containing oxygen carriers occurring freely dissolved in the hemolymph of many mollusks and arthropods.</text>
</comment>
<comment type="cofactor">
    <cofactor>
        <name>Cu(2+)</name>
        <dbReference type="ChEBI" id="CHEBI:29036"/>
    </cofactor>
    <text>Binds 2 copper ions per heterodimer.</text>
</comment>
<comment type="subunit">
    <text>Decamers of large identical subunits (390 kDa), each containing 8 globular oxygen-binding functional units.</text>
</comment>
<comment type="similarity">
    <text evidence="3">Belongs to the tyrosinase family. Hemocyanin subfamily.</text>
</comment>
<accession>P56825</accession>
<evidence type="ECO:0000250" key="1"/>
<evidence type="ECO:0000269" key="2">
    <source>
    </source>
</evidence>
<evidence type="ECO:0000305" key="3"/>
<organism>
    <name type="scientific">Sepia officinalis</name>
    <name type="common">Common cuttlefish</name>
    <dbReference type="NCBI Taxonomy" id="6610"/>
    <lineage>
        <taxon>Eukaryota</taxon>
        <taxon>Metazoa</taxon>
        <taxon>Spiralia</taxon>
        <taxon>Lophotrochozoa</taxon>
        <taxon>Mollusca</taxon>
        <taxon>Cephalopoda</taxon>
        <taxon>Coleoidea</taxon>
        <taxon>Decapodiformes</taxon>
        <taxon>Sepiida</taxon>
        <taxon>Sepiina</taxon>
        <taxon>Sepiidae</taxon>
        <taxon>Sepia</taxon>
    </lineage>
</organism>
<feature type="chain" id="PRO_0000204309" description="Hemocyanin, units E and F">
    <location>
        <begin position="1" status="less than"/>
        <end position="208" status="greater than"/>
    </location>
</feature>
<feature type="region of interest" description="Unit E">
    <location>
        <begin position="1" status="less than"/>
        <end position="74"/>
    </location>
</feature>
<feature type="region of interest" description="Unit F">
    <location>
        <begin position="75"/>
        <end position="208" status="greater than"/>
    </location>
</feature>
<feature type="binding site" evidence="1">
    <location>
        <position position="1"/>
    </location>
    <ligand>
        <name>Cu cation</name>
        <dbReference type="ChEBI" id="CHEBI:23378"/>
        <label>A</label>
    </ligand>
</feature>
<feature type="binding site" evidence="1">
    <location>
        <position position="113"/>
    </location>
    <ligand>
        <name>Cu cation</name>
        <dbReference type="ChEBI" id="CHEBI:23378"/>
        <label>A</label>
    </ligand>
</feature>
<feature type="binding site" evidence="1">
    <location>
        <position position="133"/>
    </location>
    <ligand>
        <name>Cu cation</name>
        <dbReference type="ChEBI" id="CHEBI:23378"/>
        <label>A</label>
    </ligand>
</feature>
<feature type="binding site" evidence="1">
    <location>
        <position position="142"/>
    </location>
    <ligand>
        <name>Cu cation</name>
        <dbReference type="ChEBI" id="CHEBI:23378"/>
        <label>A</label>
    </ligand>
</feature>
<feature type="glycosylation site" description="N-linked (GlcNAc...) asparagine">
    <location>
        <position position="43"/>
    </location>
</feature>
<feature type="disulfide bond">
    <location>
        <begin position="7"/>
        <end position="18"/>
    </location>
</feature>
<feature type="disulfide bond">
    <location>
        <begin position="119"/>
        <end position="130"/>
    </location>
</feature>
<feature type="cross-link" description="2'-(S-cysteinyl)-histidine (Cys-His)" evidence="2">
    <location>
        <begin position="19"/>
        <end position="21"/>
    </location>
</feature>
<feature type="cross-link" description="2'-(S-cysteinyl)-histidine (Cys-His)" evidence="2">
    <location>
        <begin position="131"/>
        <end position="133"/>
    </location>
</feature>
<feature type="non-consecutive residues" evidence="3">
    <location>
        <begin position="26"/>
        <end position="27"/>
    </location>
</feature>
<feature type="non-terminal residue">
    <location>
        <position position="1"/>
    </location>
</feature>
<feature type="non-terminal residue">
    <location>
        <position position="208"/>
    </location>
</feature>
<name>HCYE_SEPOF</name>
<protein>
    <recommendedName>
        <fullName>Hemocyanin, units E and F</fullName>
    </recommendedName>
</protein>
<reference key="1">
    <citation type="book" date="1990" name="Invertebrate Dioxygen Carriers">
        <title>Partial amino-acid sequence and location of the carbohydrate chain in functional unit f of Sepia officinalis haemocyanin.</title>
        <editorList>
            <person name="Preaux G."/>
            <person name="Lontie R."/>
        </editorList>
        <authorList>
            <person name="Top A."/>
            <person name="Gielens C."/>
            <person name="Witters R."/>
            <person name="van Beeumen J."/>
            <person name="Preaux G."/>
        </authorList>
    </citation>
    <scope>PROTEIN SEQUENCE OF 27-68 AND 98-208</scope>
</reference>
<reference key="2">
    <citation type="journal article" date="1988" name="Arch. Int. Physiol. Biochim.">
        <title>Amino-acid sequence determination of an N-terminal fragment from functional unit f of Sepia officinalis haemocyanin.</title>
        <authorList>
            <person name="Top A."/>
            <person name="Witters R."/>
            <person name="Gielens C."/>
            <person name="van Beeumen J."/>
            <person name="Preaux G."/>
        </authorList>
    </citation>
    <scope>PROTEIN SEQUENCE OF 69-125</scope>
</reference>
<reference key="3">
    <citation type="journal article" date="1997" name="Eur. J. Biochem.">
        <title>Evidence for a cysteine-histidine thioether bridge in functional units of molluscan haemocyanins and location of the disulfide bridges in functional units d and g of the beta-c-haemocyanin of Helix pomatia.</title>
        <authorList>
            <person name="Gielens C."/>
            <person name="de Geest N."/>
            <person name="Xin X.-Q."/>
            <person name="Devreese B."/>
            <person name="van Beeumen J."/>
            <person name="Preaux G."/>
        </authorList>
    </citation>
    <scope>PROTEIN SEQUENCE OF 1-26 AND 113-134</scope>
    <scope>THIOETHER BOND</scope>
    <scope>IDENTIFICATION BY MASS SPECTROMETRY</scope>
</reference>
<sequence length="208" mass="23341">HGLPAQCPNADGTMVHTCCLHGMPTFKLNFDSHFTIKTVVAQNGTELPESILPEATIDRIPPSSHDLESVRGNLVRKNVDRLSLQEVNSLVHALKRMQKDRSSDGFESIACFHALPPLCPNPTAKHRYACCLHGMATFPQWHRLYVVQFEQSLNRHGATVGVPYTDWTYPMKEVPHLLTSEKYTDPFTAVETFNPFNHGHLSLLSPET</sequence>
<proteinExistence type="evidence at protein level"/>
<keyword id="KW-0186">Copper</keyword>
<keyword id="KW-0903">Direct protein sequencing</keyword>
<keyword id="KW-1015">Disulfide bond</keyword>
<keyword id="KW-0325">Glycoprotein</keyword>
<keyword id="KW-0479">Metal-binding</keyword>
<keyword id="KW-0561">Oxygen transport</keyword>
<keyword id="KW-0677">Repeat</keyword>
<keyword id="KW-0883">Thioether bond</keyword>
<keyword id="KW-0813">Transport</keyword>